<sequence length="56" mass="6252">MLSFSQNRSHSLEQSLKEGYSQMADLNLSLANEAFPIECEACDCNETYLSSNSTNE</sequence>
<feature type="chain" id="PRO_0000330719" description="Antitoxin MazE">
    <location>
        <begin position="1"/>
        <end position="56"/>
    </location>
</feature>
<organism>
    <name type="scientific">Staphylococcus aureus (strain Newman)</name>
    <dbReference type="NCBI Taxonomy" id="426430"/>
    <lineage>
        <taxon>Bacteria</taxon>
        <taxon>Bacillati</taxon>
        <taxon>Bacillota</taxon>
        <taxon>Bacilli</taxon>
        <taxon>Bacillales</taxon>
        <taxon>Staphylococcaceae</taxon>
        <taxon>Staphylococcus</taxon>
    </lineage>
</organism>
<reference key="1">
    <citation type="journal article" date="2008" name="J. Bacteriol.">
        <title>Genome sequence of Staphylococcus aureus strain Newman and comparative analysis of staphylococcal genomes: polymorphism and evolution of two major pathogenicity islands.</title>
        <authorList>
            <person name="Baba T."/>
            <person name="Bae T."/>
            <person name="Schneewind O."/>
            <person name="Takeuchi F."/>
            <person name="Hiramatsu K."/>
        </authorList>
    </citation>
    <scope>NUCLEOTIDE SEQUENCE [LARGE SCALE GENOMIC DNA]</scope>
    <source>
        <strain>Newman</strain>
    </source>
</reference>
<reference key="2">
    <citation type="journal article" date="2007" name="J. Bacteriol.">
        <title>Characterization of mazFSa, an endoribonuclease from Staphylococcus aureus.</title>
        <authorList>
            <person name="Fu Z."/>
            <person name="Donegan N.P."/>
            <person name="Memmi G."/>
            <person name="Cheung A.L."/>
        </authorList>
    </citation>
    <scope>FUNCTION AS AN ANTITOXIN</scope>
    <scope>INDUCTION</scope>
    <scope>SUBUNIT</scope>
    <source>
        <strain>Newman</strain>
    </source>
</reference>
<reference key="3">
    <citation type="journal article" date="2009" name="J. Bacteriol.">
        <title>Overexpression of MazFsa in Staphylococcus aureus induces bacteriostasis by selectively targeting mRNAs for cleavage.</title>
        <authorList>
            <person name="Fu Z."/>
            <person name="Tamber S."/>
            <person name="Memmi G."/>
            <person name="Donegan N.P."/>
            <person name="Cheung A.L."/>
        </authorList>
    </citation>
    <scope>FUNCTION</scope>
    <source>
        <strain>Newman</strain>
    </source>
</reference>
<reference key="4">
    <citation type="journal article" date="2009" name="J. Bacteriol.">
        <title>Staphylococcus aureus MazF specifically cleaves a pentad sequence, UACAU, which is unusually abundant in the mRNA for pathogenic adhesive factor SraP.</title>
        <authorList>
            <person name="Zhu L."/>
            <person name="Inoue K."/>
            <person name="Yoshizumi S."/>
            <person name="Kobayashi H."/>
            <person name="Zhang Y."/>
            <person name="Ouyang M."/>
            <person name="Kato F."/>
            <person name="Sugai M."/>
            <person name="Inouye M."/>
        </authorList>
    </citation>
    <scope>FUNCTION</scope>
</reference>
<reference key="5">
    <citation type="journal article" date="2013" name="Anal. Biochem.">
        <title>Detection of endogenous MazF enzymatic activity in Staphylococcus aureus.</title>
        <authorList>
            <person name="van Rensburg J.J."/>
            <person name="Hergenrother P.J."/>
        </authorList>
    </citation>
    <scope>FUNCTION</scope>
    <source>
        <strain>NRS26</strain>
    </source>
</reference>
<dbReference type="EMBL" id="AP009351">
    <property type="status" value="NOT_ANNOTATED_CDS"/>
    <property type="molecule type" value="Genomic_DNA"/>
</dbReference>
<dbReference type="RefSeq" id="WP_000948331.1">
    <property type="nucleotide sequence ID" value="NZ_JBBIAE010000008.1"/>
</dbReference>
<dbReference type="SMR" id="P0C7B4"/>
<dbReference type="IntAct" id="P0C7B4">
    <property type="interactions" value="1"/>
</dbReference>
<dbReference type="GeneID" id="98346377"/>
<dbReference type="Proteomes" id="UP000006386">
    <property type="component" value="Chromosome"/>
</dbReference>
<dbReference type="GO" id="GO:0006355">
    <property type="term" value="P:regulation of DNA-templated transcription"/>
    <property type="evidence" value="ECO:0007669"/>
    <property type="project" value="InterPro"/>
</dbReference>
<dbReference type="Gene3D" id="1.10.1220.10">
    <property type="entry name" value="Met repressor-like"/>
    <property type="match status" value="1"/>
</dbReference>
<dbReference type="InterPro" id="IPR013321">
    <property type="entry name" value="Arc_rbn_hlx_hlx"/>
</dbReference>
<dbReference type="InterPro" id="IPR048242">
    <property type="entry name" value="MazE"/>
</dbReference>
<dbReference type="NCBIfam" id="NF041459">
    <property type="entry name" value="antitoxMazE_Staph"/>
    <property type="match status" value="1"/>
</dbReference>
<accession>P0C7B4</accession>
<gene>
    <name type="primary">mazE</name>
    <name type="ordered locus">NWMN_1974.1</name>
</gene>
<comment type="function">
    <text evidence="1 2 3 4">Antitoxin component of a type II toxin-antitoxin (TA) system. Labile antitoxin that binds to cognate MazF toxin and counteracts its endoribonuclease activity.</text>
</comment>
<comment type="subunit">
    <text evidence="1">Forms a complex with cognate toxin MazF which inhibits the endoribonuclease activity of MazF.</text>
</comment>
<comment type="interaction">
    <interactant intactId="EBI-6469965">
        <id>P0C7B4</id>
    </interactant>
    <interactant intactId="EBI-6469950">
        <id>A6QIR4</id>
        <label>mazF</label>
    </interactant>
    <organismsDiffer>false</organismsDiffer>
    <experiments>2</experiments>
</comment>
<comment type="induction">
    <text evidence="1">By heat shock and by exposure to sub-MIC concentrations of several antimicrobial agents such as doxycycline, erythromycin and penicillin.</text>
</comment>
<comment type="similarity">
    <text evidence="5">Belongs to the MazE/EndoAI family.</text>
</comment>
<protein>
    <recommendedName>
        <fullName>Antitoxin MazE</fullName>
    </recommendedName>
</protein>
<keyword id="KW-1277">Toxin-antitoxin system</keyword>
<name>MAZE_STAAE</name>
<proteinExistence type="evidence at protein level"/>
<evidence type="ECO:0000269" key="1">
    <source>
    </source>
</evidence>
<evidence type="ECO:0000269" key="2">
    <source>
    </source>
</evidence>
<evidence type="ECO:0000269" key="3">
    <source>
    </source>
</evidence>
<evidence type="ECO:0000269" key="4">
    <source>
    </source>
</evidence>
<evidence type="ECO:0000305" key="5"/>